<reference key="1">
    <citation type="submission" date="2007-10" db="EMBL/GenBank/DDBJ databases">
        <title>Brucella canis ATCC 23365 whole genome shotgun sequencing project.</title>
        <authorList>
            <person name="Setubal J.C."/>
            <person name="Bowns C."/>
            <person name="Boyle S."/>
            <person name="Crasta O.R."/>
            <person name="Czar M.J."/>
            <person name="Dharmanolla C."/>
            <person name="Gillespie J.J."/>
            <person name="Kenyon R.W."/>
            <person name="Lu J."/>
            <person name="Mane S."/>
            <person name="Mohapatra S."/>
            <person name="Nagrani S."/>
            <person name="Purkayastha A."/>
            <person name="Rajasimha H.K."/>
            <person name="Shallom J.M."/>
            <person name="Shallom S."/>
            <person name="Shukla M."/>
            <person name="Snyder E.E."/>
            <person name="Sobral B.W."/>
            <person name="Wattam A.R."/>
            <person name="Will R."/>
            <person name="Williams K."/>
            <person name="Yoo H."/>
            <person name="Bruce D."/>
            <person name="Detter C."/>
            <person name="Munk C."/>
            <person name="Brettin T.S."/>
        </authorList>
    </citation>
    <scope>NUCLEOTIDE SEQUENCE [LARGE SCALE GENOMIC DNA]</scope>
    <source>
        <strain>ATCC 23365 / NCTC 10854 / RM-666</strain>
    </source>
</reference>
<accession>A9MCZ2</accession>
<name>UBIE_BRUC2</name>
<sequence length="269" mass="29926">MSQQNGNVNRVGAQDRVGASGGMEHSFGFKAVDENEKQGLVNDVFHKVAKRYDIMNDLMSAGMHRVWKDAMVAWLAPSKRPGWTSLDVAGGTGDIAFRIVEVSGRQAHVTILDINGSMLGVGRERAIKKGLIDNLEFVEANAEELPFEDNSFDAYTIAFGIRNVPHIDKALSEAYRVLKPGGRFLCLEFSEVELPVLDKVYDEWSFRAIPRIGKMITGDADSYSYLVESIRKFPKQQDFAAMIEKAGFERVSYRNFTGGIAALHSGWKL</sequence>
<gene>
    <name evidence="1" type="primary">ubiE</name>
    <name type="ordered locus">BCAN_B1088</name>
</gene>
<keyword id="KW-0474">Menaquinone biosynthesis</keyword>
<keyword id="KW-0489">Methyltransferase</keyword>
<keyword id="KW-1185">Reference proteome</keyword>
<keyword id="KW-0949">S-adenosyl-L-methionine</keyword>
<keyword id="KW-0808">Transferase</keyword>
<keyword id="KW-0831">Ubiquinone biosynthesis</keyword>
<dbReference type="EC" id="2.1.1.163" evidence="1"/>
<dbReference type="EC" id="2.1.1.201" evidence="1"/>
<dbReference type="EMBL" id="CP000873">
    <property type="protein sequence ID" value="ABX64229.1"/>
    <property type="molecule type" value="Genomic_DNA"/>
</dbReference>
<dbReference type="RefSeq" id="WP_004690414.1">
    <property type="nucleotide sequence ID" value="NC_010104.1"/>
</dbReference>
<dbReference type="SMR" id="A9MCZ2"/>
<dbReference type="GeneID" id="55592686"/>
<dbReference type="KEGG" id="bcs:BCAN_B1088"/>
<dbReference type="HOGENOM" id="CLU_037990_0_0_5"/>
<dbReference type="PhylomeDB" id="A9MCZ2"/>
<dbReference type="UniPathway" id="UPA00079">
    <property type="reaction ID" value="UER00169"/>
</dbReference>
<dbReference type="UniPathway" id="UPA00232"/>
<dbReference type="Proteomes" id="UP000001385">
    <property type="component" value="Chromosome II"/>
</dbReference>
<dbReference type="GO" id="GO:0008425">
    <property type="term" value="F:2-methoxy-6-polyprenyl-1,4-benzoquinol methyltransferase activity"/>
    <property type="evidence" value="ECO:0007669"/>
    <property type="project" value="UniProtKB-UniRule"/>
</dbReference>
<dbReference type="GO" id="GO:0043770">
    <property type="term" value="F:demethylmenaquinone methyltransferase activity"/>
    <property type="evidence" value="ECO:0007669"/>
    <property type="project" value="UniProtKB-UniRule"/>
</dbReference>
<dbReference type="GO" id="GO:0009060">
    <property type="term" value="P:aerobic respiration"/>
    <property type="evidence" value="ECO:0007669"/>
    <property type="project" value="UniProtKB-UniRule"/>
</dbReference>
<dbReference type="GO" id="GO:0009234">
    <property type="term" value="P:menaquinone biosynthetic process"/>
    <property type="evidence" value="ECO:0007669"/>
    <property type="project" value="UniProtKB-UniRule"/>
</dbReference>
<dbReference type="GO" id="GO:0032259">
    <property type="term" value="P:methylation"/>
    <property type="evidence" value="ECO:0007669"/>
    <property type="project" value="UniProtKB-KW"/>
</dbReference>
<dbReference type="CDD" id="cd02440">
    <property type="entry name" value="AdoMet_MTases"/>
    <property type="match status" value="1"/>
</dbReference>
<dbReference type="FunFam" id="3.40.50.150:FF:000064">
    <property type="entry name" value="2-methoxy-6-polyprenyl-1,4-benzoquinol methylase, mitochondrial"/>
    <property type="match status" value="1"/>
</dbReference>
<dbReference type="Gene3D" id="3.40.50.150">
    <property type="entry name" value="Vaccinia Virus protein VP39"/>
    <property type="match status" value="1"/>
</dbReference>
<dbReference type="HAMAP" id="MF_01813">
    <property type="entry name" value="MenG_UbiE_methyltr"/>
    <property type="match status" value="1"/>
</dbReference>
<dbReference type="InterPro" id="IPR029063">
    <property type="entry name" value="SAM-dependent_MTases_sf"/>
</dbReference>
<dbReference type="InterPro" id="IPR004033">
    <property type="entry name" value="UbiE/COQ5_MeTrFase"/>
</dbReference>
<dbReference type="InterPro" id="IPR023576">
    <property type="entry name" value="UbiE/COQ5_MeTrFase_CS"/>
</dbReference>
<dbReference type="NCBIfam" id="TIGR01934">
    <property type="entry name" value="MenG_MenH_UbiE"/>
    <property type="match status" value="1"/>
</dbReference>
<dbReference type="NCBIfam" id="NF001242">
    <property type="entry name" value="PRK00216.1-3"/>
    <property type="match status" value="1"/>
</dbReference>
<dbReference type="NCBIfam" id="NF001244">
    <property type="entry name" value="PRK00216.1-5"/>
    <property type="match status" value="1"/>
</dbReference>
<dbReference type="PANTHER" id="PTHR43591:SF24">
    <property type="entry name" value="2-METHOXY-6-POLYPRENYL-1,4-BENZOQUINOL METHYLASE, MITOCHONDRIAL"/>
    <property type="match status" value="1"/>
</dbReference>
<dbReference type="PANTHER" id="PTHR43591">
    <property type="entry name" value="METHYLTRANSFERASE"/>
    <property type="match status" value="1"/>
</dbReference>
<dbReference type="Pfam" id="PF01209">
    <property type="entry name" value="Ubie_methyltran"/>
    <property type="match status" value="1"/>
</dbReference>
<dbReference type="SUPFAM" id="SSF53335">
    <property type="entry name" value="S-adenosyl-L-methionine-dependent methyltransferases"/>
    <property type="match status" value="1"/>
</dbReference>
<dbReference type="PROSITE" id="PS51608">
    <property type="entry name" value="SAM_MT_UBIE"/>
    <property type="match status" value="1"/>
</dbReference>
<dbReference type="PROSITE" id="PS01183">
    <property type="entry name" value="UBIE_1"/>
    <property type="match status" value="1"/>
</dbReference>
<dbReference type="PROSITE" id="PS01184">
    <property type="entry name" value="UBIE_2"/>
    <property type="match status" value="1"/>
</dbReference>
<comment type="function">
    <text evidence="1">Methyltransferase required for the conversion of demethylmenaquinol (DMKH2) to menaquinol (MKH2) and the conversion of 2-polyprenyl-6-methoxy-1,4-benzoquinol (DDMQH2) to 2-polyprenyl-3-methyl-6-methoxy-1,4-benzoquinol (DMQH2).</text>
</comment>
<comment type="catalytic activity">
    <reaction evidence="1">
        <text>a 2-demethylmenaquinol + S-adenosyl-L-methionine = a menaquinol + S-adenosyl-L-homocysteine + H(+)</text>
        <dbReference type="Rhea" id="RHEA:42640"/>
        <dbReference type="Rhea" id="RHEA-COMP:9539"/>
        <dbReference type="Rhea" id="RHEA-COMP:9563"/>
        <dbReference type="ChEBI" id="CHEBI:15378"/>
        <dbReference type="ChEBI" id="CHEBI:18151"/>
        <dbReference type="ChEBI" id="CHEBI:55437"/>
        <dbReference type="ChEBI" id="CHEBI:57856"/>
        <dbReference type="ChEBI" id="CHEBI:59789"/>
        <dbReference type="EC" id="2.1.1.163"/>
    </reaction>
</comment>
<comment type="catalytic activity">
    <reaction evidence="1">
        <text>a 2-methoxy-6-(all-trans-polyprenyl)benzene-1,4-diol + S-adenosyl-L-methionine = a 5-methoxy-2-methyl-3-(all-trans-polyprenyl)benzene-1,4-diol + S-adenosyl-L-homocysteine + H(+)</text>
        <dbReference type="Rhea" id="RHEA:28286"/>
        <dbReference type="Rhea" id="RHEA-COMP:10858"/>
        <dbReference type="Rhea" id="RHEA-COMP:10859"/>
        <dbReference type="ChEBI" id="CHEBI:15378"/>
        <dbReference type="ChEBI" id="CHEBI:57856"/>
        <dbReference type="ChEBI" id="CHEBI:59789"/>
        <dbReference type="ChEBI" id="CHEBI:84166"/>
        <dbReference type="ChEBI" id="CHEBI:84167"/>
        <dbReference type="EC" id="2.1.1.201"/>
    </reaction>
</comment>
<comment type="pathway">
    <text evidence="1">Quinol/quinone metabolism; menaquinone biosynthesis; menaquinol from 1,4-dihydroxy-2-naphthoate: step 2/2.</text>
</comment>
<comment type="pathway">
    <text evidence="1">Cofactor biosynthesis; ubiquinone biosynthesis.</text>
</comment>
<comment type="similarity">
    <text evidence="1">Belongs to the class I-like SAM-binding methyltransferase superfamily. MenG/UbiE family.</text>
</comment>
<organism>
    <name type="scientific">Brucella canis (strain ATCC 23365 / NCTC 10854 / RM-666)</name>
    <dbReference type="NCBI Taxonomy" id="483179"/>
    <lineage>
        <taxon>Bacteria</taxon>
        <taxon>Pseudomonadati</taxon>
        <taxon>Pseudomonadota</taxon>
        <taxon>Alphaproteobacteria</taxon>
        <taxon>Hyphomicrobiales</taxon>
        <taxon>Brucellaceae</taxon>
        <taxon>Brucella/Ochrobactrum group</taxon>
        <taxon>Brucella</taxon>
    </lineage>
</organism>
<proteinExistence type="inferred from homology"/>
<evidence type="ECO:0000255" key="1">
    <source>
        <dbReference type="HAMAP-Rule" id="MF_01813"/>
    </source>
</evidence>
<protein>
    <recommendedName>
        <fullName evidence="1">Ubiquinone/menaquinone biosynthesis C-methyltransferase UbiE</fullName>
        <ecNumber evidence="1">2.1.1.163</ecNumber>
        <ecNumber evidence="1">2.1.1.201</ecNumber>
    </recommendedName>
    <alternativeName>
        <fullName evidence="1">2-methoxy-6-polyprenyl-1,4-benzoquinol methylase</fullName>
    </alternativeName>
    <alternativeName>
        <fullName evidence="1">Demethylmenaquinone methyltransferase</fullName>
    </alternativeName>
</protein>
<feature type="chain" id="PRO_1000088276" description="Ubiquinone/menaquinone biosynthesis C-methyltransferase UbiE">
    <location>
        <begin position="1"/>
        <end position="269"/>
    </location>
</feature>
<feature type="binding site" evidence="1">
    <location>
        <position position="92"/>
    </location>
    <ligand>
        <name>S-adenosyl-L-methionine</name>
        <dbReference type="ChEBI" id="CHEBI:59789"/>
    </ligand>
</feature>
<feature type="binding site" evidence="1">
    <location>
        <position position="113"/>
    </location>
    <ligand>
        <name>S-adenosyl-L-methionine</name>
        <dbReference type="ChEBI" id="CHEBI:59789"/>
    </ligand>
</feature>
<feature type="binding site" evidence="1">
    <location>
        <begin position="141"/>
        <end position="142"/>
    </location>
    <ligand>
        <name>S-adenosyl-L-methionine</name>
        <dbReference type="ChEBI" id="CHEBI:59789"/>
    </ligand>
</feature>